<dbReference type="EMBL" id="AM180355">
    <property type="protein sequence ID" value="CAJ68109.1"/>
    <property type="molecule type" value="Genomic_DNA"/>
</dbReference>
<dbReference type="RefSeq" id="WP_003419338.1">
    <property type="nucleotide sequence ID" value="NZ_JAUPES010000045.1"/>
</dbReference>
<dbReference type="RefSeq" id="YP_001087747.1">
    <property type="nucleotide sequence ID" value="NC_009089.1"/>
</dbReference>
<dbReference type="SMR" id="Q18BB8"/>
<dbReference type="STRING" id="272563.CD630_12530"/>
<dbReference type="EnsemblBacteria" id="CAJ68109">
    <property type="protein sequence ID" value="CAJ68109"/>
    <property type="gene ID" value="CD630_12530"/>
</dbReference>
<dbReference type="GeneID" id="66353654"/>
<dbReference type="KEGG" id="cdf:CD630_12530"/>
<dbReference type="KEGG" id="pdc:CDIF630_01406"/>
<dbReference type="PATRIC" id="fig|272563.120.peg.1311"/>
<dbReference type="eggNOG" id="COG0228">
    <property type="taxonomic scope" value="Bacteria"/>
</dbReference>
<dbReference type="OrthoDB" id="9807878at2"/>
<dbReference type="PhylomeDB" id="Q18BB8"/>
<dbReference type="BioCyc" id="PDIF272563:G12WB-1387-MONOMER"/>
<dbReference type="Proteomes" id="UP000001978">
    <property type="component" value="Chromosome"/>
</dbReference>
<dbReference type="GO" id="GO:0005737">
    <property type="term" value="C:cytoplasm"/>
    <property type="evidence" value="ECO:0007669"/>
    <property type="project" value="UniProtKB-ARBA"/>
</dbReference>
<dbReference type="GO" id="GO:0015935">
    <property type="term" value="C:small ribosomal subunit"/>
    <property type="evidence" value="ECO:0007669"/>
    <property type="project" value="TreeGrafter"/>
</dbReference>
<dbReference type="GO" id="GO:0003735">
    <property type="term" value="F:structural constituent of ribosome"/>
    <property type="evidence" value="ECO:0007669"/>
    <property type="project" value="InterPro"/>
</dbReference>
<dbReference type="GO" id="GO:0006412">
    <property type="term" value="P:translation"/>
    <property type="evidence" value="ECO:0007669"/>
    <property type="project" value="UniProtKB-UniRule"/>
</dbReference>
<dbReference type="FunFam" id="3.30.1320.10:FF:000002">
    <property type="entry name" value="30S ribosomal protein S16"/>
    <property type="match status" value="1"/>
</dbReference>
<dbReference type="Gene3D" id="3.30.1320.10">
    <property type="match status" value="1"/>
</dbReference>
<dbReference type="HAMAP" id="MF_00385">
    <property type="entry name" value="Ribosomal_bS16"/>
    <property type="match status" value="1"/>
</dbReference>
<dbReference type="InterPro" id="IPR000307">
    <property type="entry name" value="Ribosomal_bS16"/>
</dbReference>
<dbReference type="InterPro" id="IPR020592">
    <property type="entry name" value="Ribosomal_bS16_CS"/>
</dbReference>
<dbReference type="InterPro" id="IPR023803">
    <property type="entry name" value="Ribosomal_bS16_dom_sf"/>
</dbReference>
<dbReference type="NCBIfam" id="TIGR00002">
    <property type="entry name" value="S16"/>
    <property type="match status" value="1"/>
</dbReference>
<dbReference type="PANTHER" id="PTHR12919">
    <property type="entry name" value="30S RIBOSOMAL PROTEIN S16"/>
    <property type="match status" value="1"/>
</dbReference>
<dbReference type="PANTHER" id="PTHR12919:SF20">
    <property type="entry name" value="SMALL RIBOSOMAL SUBUNIT PROTEIN BS16M"/>
    <property type="match status" value="1"/>
</dbReference>
<dbReference type="Pfam" id="PF00886">
    <property type="entry name" value="Ribosomal_S16"/>
    <property type="match status" value="1"/>
</dbReference>
<dbReference type="SUPFAM" id="SSF54565">
    <property type="entry name" value="Ribosomal protein S16"/>
    <property type="match status" value="1"/>
</dbReference>
<dbReference type="PROSITE" id="PS00732">
    <property type="entry name" value="RIBOSOMAL_S16"/>
    <property type="match status" value="1"/>
</dbReference>
<accession>Q18BB8</accession>
<comment type="similarity">
    <text evidence="1">Belongs to the bacterial ribosomal protein bS16 family.</text>
</comment>
<evidence type="ECO:0000255" key="1">
    <source>
        <dbReference type="HAMAP-Rule" id="MF_00385"/>
    </source>
</evidence>
<evidence type="ECO:0000305" key="2"/>
<gene>
    <name evidence="1" type="primary">rpsP</name>
    <name type="ordered locus">CD630_12530</name>
</gene>
<protein>
    <recommendedName>
        <fullName evidence="1">Small ribosomal subunit protein bS16</fullName>
    </recommendedName>
    <alternativeName>
        <fullName evidence="2">30S ribosomal protein S16</fullName>
    </alternativeName>
</protein>
<reference key="1">
    <citation type="journal article" date="2006" name="Nat. Genet.">
        <title>The multidrug-resistant human pathogen Clostridium difficile has a highly mobile, mosaic genome.</title>
        <authorList>
            <person name="Sebaihia M."/>
            <person name="Wren B.W."/>
            <person name="Mullany P."/>
            <person name="Fairweather N.F."/>
            <person name="Minton N."/>
            <person name="Stabler R."/>
            <person name="Thomson N.R."/>
            <person name="Roberts A.P."/>
            <person name="Cerdeno-Tarraga A.M."/>
            <person name="Wang H."/>
            <person name="Holden M.T.G."/>
            <person name="Wright A."/>
            <person name="Churcher C."/>
            <person name="Quail M.A."/>
            <person name="Baker S."/>
            <person name="Bason N."/>
            <person name="Brooks K."/>
            <person name="Chillingworth T."/>
            <person name="Cronin A."/>
            <person name="Davis P."/>
            <person name="Dowd L."/>
            <person name="Fraser A."/>
            <person name="Feltwell T."/>
            <person name="Hance Z."/>
            <person name="Holroyd S."/>
            <person name="Jagels K."/>
            <person name="Moule S."/>
            <person name="Mungall K."/>
            <person name="Price C."/>
            <person name="Rabbinowitsch E."/>
            <person name="Sharp S."/>
            <person name="Simmonds M."/>
            <person name="Stevens K."/>
            <person name="Unwin L."/>
            <person name="Whithead S."/>
            <person name="Dupuy B."/>
            <person name="Dougan G."/>
            <person name="Barrell B."/>
            <person name="Parkhill J."/>
        </authorList>
    </citation>
    <scope>NUCLEOTIDE SEQUENCE [LARGE SCALE GENOMIC DNA]</scope>
    <source>
        <strain>630</strain>
    </source>
</reference>
<keyword id="KW-1185">Reference proteome</keyword>
<keyword id="KW-0687">Ribonucleoprotein</keyword>
<keyword id="KW-0689">Ribosomal protein</keyword>
<feature type="chain" id="PRO_1000049243" description="Small ribosomal subunit protein bS16">
    <location>
        <begin position="1"/>
        <end position="90"/>
    </location>
</feature>
<organism>
    <name type="scientific">Clostridioides difficile (strain 630)</name>
    <name type="common">Peptoclostridium difficile</name>
    <dbReference type="NCBI Taxonomy" id="272563"/>
    <lineage>
        <taxon>Bacteria</taxon>
        <taxon>Bacillati</taxon>
        <taxon>Bacillota</taxon>
        <taxon>Clostridia</taxon>
        <taxon>Peptostreptococcales</taxon>
        <taxon>Peptostreptococcaceae</taxon>
        <taxon>Clostridioides</taxon>
    </lineage>
</organism>
<proteinExistence type="inferred from homology"/>
<name>RS16_CLOD6</name>
<sequence length="90" mass="10244">MAVKIRLKRMGANKKPFYRIVVADSRAPRDGKFIEEIGYYNPISEPKQVRINDEKAIKWLATGAQPTEVVKKLLVKNGVIEKFEASKQAK</sequence>